<accession>Q12Z94</accession>
<evidence type="ECO:0000255" key="1">
    <source>
        <dbReference type="HAMAP-Rule" id="MF_00451"/>
    </source>
</evidence>
<comment type="function">
    <text evidence="1">Major role in the synthesis of nucleoside triphosphates other than ATP. The ATP gamma phosphate is transferred to the NDP beta phosphate via a ping-pong mechanism, using a phosphorylated active-site intermediate.</text>
</comment>
<comment type="catalytic activity">
    <reaction evidence="1">
        <text>a 2'-deoxyribonucleoside 5'-diphosphate + ATP = a 2'-deoxyribonucleoside 5'-triphosphate + ADP</text>
        <dbReference type="Rhea" id="RHEA:44640"/>
        <dbReference type="ChEBI" id="CHEBI:30616"/>
        <dbReference type="ChEBI" id="CHEBI:61560"/>
        <dbReference type="ChEBI" id="CHEBI:73316"/>
        <dbReference type="ChEBI" id="CHEBI:456216"/>
        <dbReference type="EC" id="2.7.4.6"/>
    </reaction>
</comment>
<comment type="catalytic activity">
    <reaction evidence="1">
        <text>a ribonucleoside 5'-diphosphate + ATP = a ribonucleoside 5'-triphosphate + ADP</text>
        <dbReference type="Rhea" id="RHEA:18113"/>
        <dbReference type="ChEBI" id="CHEBI:30616"/>
        <dbReference type="ChEBI" id="CHEBI:57930"/>
        <dbReference type="ChEBI" id="CHEBI:61557"/>
        <dbReference type="ChEBI" id="CHEBI:456216"/>
        <dbReference type="EC" id="2.7.4.6"/>
    </reaction>
</comment>
<comment type="cofactor">
    <cofactor evidence="1">
        <name>Mg(2+)</name>
        <dbReference type="ChEBI" id="CHEBI:18420"/>
    </cofactor>
</comment>
<comment type="subcellular location">
    <subcellularLocation>
        <location evidence="1">Cytoplasm</location>
    </subcellularLocation>
</comment>
<comment type="similarity">
    <text evidence="1">Belongs to the NDK family.</text>
</comment>
<gene>
    <name evidence="1" type="primary">ndk</name>
    <name type="ordered locus">Mbur_0222</name>
</gene>
<reference key="1">
    <citation type="journal article" date="2009" name="ISME J.">
        <title>The genome sequence of the psychrophilic archaeon, Methanococcoides burtonii: the role of genome evolution in cold adaptation.</title>
        <authorList>
            <person name="Allen M.A."/>
            <person name="Lauro F.M."/>
            <person name="Williams T.J."/>
            <person name="Burg D."/>
            <person name="Siddiqui K.S."/>
            <person name="De Francisci D."/>
            <person name="Chong K.W."/>
            <person name="Pilak O."/>
            <person name="Chew H.H."/>
            <person name="De Maere M.Z."/>
            <person name="Ting L."/>
            <person name="Katrib M."/>
            <person name="Ng C."/>
            <person name="Sowers K.R."/>
            <person name="Galperin M.Y."/>
            <person name="Anderson I.J."/>
            <person name="Ivanova N."/>
            <person name="Dalin E."/>
            <person name="Martinez M."/>
            <person name="Lapidus A."/>
            <person name="Hauser L."/>
            <person name="Land M."/>
            <person name="Thomas T."/>
            <person name="Cavicchioli R."/>
        </authorList>
    </citation>
    <scope>NUCLEOTIDE SEQUENCE [LARGE SCALE GENOMIC DNA]</scope>
    <source>
        <strain>DSM 6242 / NBRC 107633 / OCM 468 / ACE-M</strain>
    </source>
</reference>
<protein>
    <recommendedName>
        <fullName evidence="1">Nucleoside diphosphate kinase</fullName>
        <shortName evidence="1">NDK</shortName>
        <shortName evidence="1">NDP kinase</shortName>
        <ecNumber evidence="1">2.7.4.6</ecNumber>
    </recommendedName>
    <alternativeName>
        <fullName evidence="1">Nucleoside-2-P kinase</fullName>
    </alternativeName>
</protein>
<dbReference type="EC" id="2.7.4.6" evidence="1"/>
<dbReference type="EMBL" id="CP000300">
    <property type="protein sequence ID" value="ABE51232.1"/>
    <property type="molecule type" value="Genomic_DNA"/>
</dbReference>
<dbReference type="RefSeq" id="WP_011498394.1">
    <property type="nucleotide sequence ID" value="NC_007955.1"/>
</dbReference>
<dbReference type="SMR" id="Q12Z94"/>
<dbReference type="STRING" id="259564.Mbur_0222"/>
<dbReference type="GeneID" id="3997658"/>
<dbReference type="KEGG" id="mbu:Mbur_0222"/>
<dbReference type="HOGENOM" id="CLU_060216_6_3_2"/>
<dbReference type="OrthoDB" id="6874at2157"/>
<dbReference type="Proteomes" id="UP000001979">
    <property type="component" value="Chromosome"/>
</dbReference>
<dbReference type="GO" id="GO:0005737">
    <property type="term" value="C:cytoplasm"/>
    <property type="evidence" value="ECO:0007669"/>
    <property type="project" value="UniProtKB-SubCell"/>
</dbReference>
<dbReference type="GO" id="GO:0005524">
    <property type="term" value="F:ATP binding"/>
    <property type="evidence" value="ECO:0007669"/>
    <property type="project" value="UniProtKB-UniRule"/>
</dbReference>
<dbReference type="GO" id="GO:0046872">
    <property type="term" value="F:metal ion binding"/>
    <property type="evidence" value="ECO:0007669"/>
    <property type="project" value="UniProtKB-KW"/>
</dbReference>
<dbReference type="GO" id="GO:0004550">
    <property type="term" value="F:nucleoside diphosphate kinase activity"/>
    <property type="evidence" value="ECO:0007669"/>
    <property type="project" value="UniProtKB-UniRule"/>
</dbReference>
<dbReference type="GO" id="GO:0006241">
    <property type="term" value="P:CTP biosynthetic process"/>
    <property type="evidence" value="ECO:0007669"/>
    <property type="project" value="UniProtKB-UniRule"/>
</dbReference>
<dbReference type="GO" id="GO:0006183">
    <property type="term" value="P:GTP biosynthetic process"/>
    <property type="evidence" value="ECO:0007669"/>
    <property type="project" value="UniProtKB-UniRule"/>
</dbReference>
<dbReference type="GO" id="GO:0006228">
    <property type="term" value="P:UTP biosynthetic process"/>
    <property type="evidence" value="ECO:0007669"/>
    <property type="project" value="UniProtKB-UniRule"/>
</dbReference>
<dbReference type="CDD" id="cd04413">
    <property type="entry name" value="NDPk_I"/>
    <property type="match status" value="1"/>
</dbReference>
<dbReference type="FunFam" id="3.30.70.141:FF:000003">
    <property type="entry name" value="Nucleoside diphosphate kinase"/>
    <property type="match status" value="1"/>
</dbReference>
<dbReference type="Gene3D" id="3.30.70.141">
    <property type="entry name" value="Nucleoside diphosphate kinase-like domain"/>
    <property type="match status" value="1"/>
</dbReference>
<dbReference type="HAMAP" id="MF_00451">
    <property type="entry name" value="NDP_kinase"/>
    <property type="match status" value="1"/>
</dbReference>
<dbReference type="InterPro" id="IPR034907">
    <property type="entry name" value="NDK-like_dom"/>
</dbReference>
<dbReference type="InterPro" id="IPR036850">
    <property type="entry name" value="NDK-like_dom_sf"/>
</dbReference>
<dbReference type="InterPro" id="IPR001564">
    <property type="entry name" value="Nucleoside_diP_kinase"/>
</dbReference>
<dbReference type="InterPro" id="IPR023005">
    <property type="entry name" value="Nucleoside_diP_kinase_AS"/>
</dbReference>
<dbReference type="NCBIfam" id="NF001908">
    <property type="entry name" value="PRK00668.1"/>
    <property type="match status" value="1"/>
</dbReference>
<dbReference type="PANTHER" id="PTHR11349">
    <property type="entry name" value="NUCLEOSIDE DIPHOSPHATE KINASE"/>
    <property type="match status" value="1"/>
</dbReference>
<dbReference type="Pfam" id="PF00334">
    <property type="entry name" value="NDK"/>
    <property type="match status" value="1"/>
</dbReference>
<dbReference type="PRINTS" id="PR01243">
    <property type="entry name" value="NUCDPKINASE"/>
</dbReference>
<dbReference type="SMART" id="SM00562">
    <property type="entry name" value="NDK"/>
    <property type="match status" value="1"/>
</dbReference>
<dbReference type="SUPFAM" id="SSF54919">
    <property type="entry name" value="Nucleoside diphosphate kinase, NDK"/>
    <property type="match status" value="1"/>
</dbReference>
<dbReference type="PROSITE" id="PS00469">
    <property type="entry name" value="NDPK"/>
    <property type="match status" value="1"/>
</dbReference>
<dbReference type="PROSITE" id="PS51374">
    <property type="entry name" value="NDPK_LIKE"/>
    <property type="match status" value="1"/>
</dbReference>
<sequence length="149" mass="16407">MERTYVMVKPDGVQRCLVGEIVSRIEKKGLKIAALRMNVMTEAAAKEHYKEHSERPFFGSLVSFVTSGPSVSMVIEGNNAIKIMRAINGATNPVDALPGTIRGDLAVDMGRNVVHASDAPESAEREIGLHFEESEISGYPRADDEWLYE</sequence>
<organism>
    <name type="scientific">Methanococcoides burtonii (strain DSM 6242 / NBRC 107633 / OCM 468 / ACE-M)</name>
    <dbReference type="NCBI Taxonomy" id="259564"/>
    <lineage>
        <taxon>Archaea</taxon>
        <taxon>Methanobacteriati</taxon>
        <taxon>Methanobacteriota</taxon>
        <taxon>Stenosarchaea group</taxon>
        <taxon>Methanomicrobia</taxon>
        <taxon>Methanosarcinales</taxon>
        <taxon>Methanosarcinaceae</taxon>
        <taxon>Methanococcoides</taxon>
    </lineage>
</organism>
<name>NDK_METBU</name>
<keyword id="KW-0067">ATP-binding</keyword>
<keyword id="KW-0963">Cytoplasm</keyword>
<keyword id="KW-0418">Kinase</keyword>
<keyword id="KW-0460">Magnesium</keyword>
<keyword id="KW-0479">Metal-binding</keyword>
<keyword id="KW-0546">Nucleotide metabolism</keyword>
<keyword id="KW-0547">Nucleotide-binding</keyword>
<keyword id="KW-0597">Phosphoprotein</keyword>
<keyword id="KW-0808">Transferase</keyword>
<proteinExistence type="inferred from homology"/>
<feature type="chain" id="PRO_0000267812" description="Nucleoside diphosphate kinase">
    <location>
        <begin position="1"/>
        <end position="149"/>
    </location>
</feature>
<feature type="active site" description="Pros-phosphohistidine intermediate" evidence="1">
    <location>
        <position position="115"/>
    </location>
</feature>
<feature type="binding site" evidence="1">
    <location>
        <position position="9"/>
    </location>
    <ligand>
        <name>ATP</name>
        <dbReference type="ChEBI" id="CHEBI:30616"/>
    </ligand>
</feature>
<feature type="binding site" evidence="1">
    <location>
        <position position="57"/>
    </location>
    <ligand>
        <name>ATP</name>
        <dbReference type="ChEBI" id="CHEBI:30616"/>
    </ligand>
</feature>
<feature type="binding site" evidence="1">
    <location>
        <position position="85"/>
    </location>
    <ligand>
        <name>ATP</name>
        <dbReference type="ChEBI" id="CHEBI:30616"/>
    </ligand>
</feature>
<feature type="binding site" evidence="1">
    <location>
        <position position="91"/>
    </location>
    <ligand>
        <name>ATP</name>
        <dbReference type="ChEBI" id="CHEBI:30616"/>
    </ligand>
</feature>
<feature type="binding site" evidence="1">
    <location>
        <position position="102"/>
    </location>
    <ligand>
        <name>ATP</name>
        <dbReference type="ChEBI" id="CHEBI:30616"/>
    </ligand>
</feature>
<feature type="binding site" evidence="1">
    <location>
        <position position="112"/>
    </location>
    <ligand>
        <name>ATP</name>
        <dbReference type="ChEBI" id="CHEBI:30616"/>
    </ligand>
</feature>